<proteinExistence type="inferred from homology"/>
<reference key="1">
    <citation type="journal article" date="2000" name="Nucleic Acids Res.">
        <title>Complete genome sequence of the alkaliphilic bacterium Bacillus halodurans and genomic sequence comparison with Bacillus subtilis.</title>
        <authorList>
            <person name="Takami H."/>
            <person name="Nakasone K."/>
            <person name="Takaki Y."/>
            <person name="Maeno G."/>
            <person name="Sasaki R."/>
            <person name="Masui N."/>
            <person name="Fuji F."/>
            <person name="Hirama C."/>
            <person name="Nakamura Y."/>
            <person name="Ogasawara N."/>
            <person name="Kuhara S."/>
            <person name="Horikoshi K."/>
        </authorList>
    </citation>
    <scope>NUCLEOTIDE SEQUENCE [LARGE SCALE GENOMIC DNA]</scope>
    <source>
        <strain>ATCC BAA-125 / DSM 18197 / FERM 7344 / JCM 9153 / C-125</strain>
    </source>
</reference>
<organism>
    <name type="scientific">Halalkalibacterium halodurans (strain ATCC BAA-125 / DSM 18197 / FERM 7344 / JCM 9153 / C-125)</name>
    <name type="common">Bacillus halodurans</name>
    <dbReference type="NCBI Taxonomy" id="272558"/>
    <lineage>
        <taxon>Bacteria</taxon>
        <taxon>Bacillati</taxon>
        <taxon>Bacillota</taxon>
        <taxon>Bacilli</taxon>
        <taxon>Bacillales</taxon>
        <taxon>Bacillaceae</taxon>
        <taxon>Halalkalibacterium (ex Joshi et al. 2022)</taxon>
    </lineage>
</organism>
<accession>Q9K820</accession>
<comment type="catalytic activity">
    <reaction evidence="1">
        <text>L-citrulline + L-aspartate + ATP = 2-(N(omega)-L-arginino)succinate + AMP + diphosphate + H(+)</text>
        <dbReference type="Rhea" id="RHEA:10932"/>
        <dbReference type="ChEBI" id="CHEBI:15378"/>
        <dbReference type="ChEBI" id="CHEBI:29991"/>
        <dbReference type="ChEBI" id="CHEBI:30616"/>
        <dbReference type="ChEBI" id="CHEBI:33019"/>
        <dbReference type="ChEBI" id="CHEBI:57472"/>
        <dbReference type="ChEBI" id="CHEBI:57743"/>
        <dbReference type="ChEBI" id="CHEBI:456215"/>
        <dbReference type="EC" id="6.3.4.5"/>
    </reaction>
</comment>
<comment type="pathway">
    <text evidence="1">Amino-acid biosynthesis; L-arginine biosynthesis; L-arginine from L-ornithine and carbamoyl phosphate: step 2/3.</text>
</comment>
<comment type="subunit">
    <text evidence="1">Homotetramer.</text>
</comment>
<comment type="subcellular location">
    <subcellularLocation>
        <location evidence="1">Cytoplasm</location>
    </subcellularLocation>
</comment>
<comment type="similarity">
    <text evidence="1">Belongs to the argininosuccinate synthase family. Type 1 subfamily.</text>
</comment>
<name>ASSY_HALH5</name>
<sequence length="409" mass="45490">MSKKKVVLAYSGGLDTSVAIKWLSDKGYDVIAVGLDVGEGKDLEFVKEKALKVGAIESYTIDAKKEFAEEFVLPALQAHALYEQKYPLVSALSRPLISKKLVEIAEQTGAQAVAHGCTGKGNDQVRFEVSIQALNPNLEVLAPVREWAWSRDEEIEYAKKNNIPIPIDLDNPYSVDQNLWGRSNECGILEDPWATPPEGAYELTVAIEDAPDQPEIVEIGFEKGIPVTLNGKSYPVHELILELNQIAGKHGVGRIDHVENRLVGIKSREVYECPGAMTLIKAHKELEDLTLTKEVAHFKPVVEKKIAELIYEGLWFSPLQPALSAFLKETQSTVTGVVRVKLFKGHAIVEGRKSEYSLYNEKLATYTPDDEFDHNAAVGFISLWGLPTKVYSMVNKEMKEKQEKKEVTS</sequence>
<gene>
    <name evidence="1" type="primary">argG</name>
    <name type="ordered locus">BH3187</name>
</gene>
<dbReference type="EC" id="6.3.4.5" evidence="1"/>
<dbReference type="EMBL" id="BA000004">
    <property type="protein sequence ID" value="BAB06906.1"/>
    <property type="molecule type" value="Genomic_DNA"/>
</dbReference>
<dbReference type="PIR" id="C84048">
    <property type="entry name" value="C84048"/>
</dbReference>
<dbReference type="RefSeq" id="WP_010899330.1">
    <property type="nucleotide sequence ID" value="NC_002570.2"/>
</dbReference>
<dbReference type="SMR" id="Q9K820"/>
<dbReference type="STRING" id="272558.gene:10729099"/>
<dbReference type="GeneID" id="87598707"/>
<dbReference type="KEGG" id="bha:BH3187"/>
<dbReference type="eggNOG" id="COG0137">
    <property type="taxonomic scope" value="Bacteria"/>
</dbReference>
<dbReference type="HOGENOM" id="CLU_032784_4_2_9"/>
<dbReference type="OrthoDB" id="9801641at2"/>
<dbReference type="UniPathway" id="UPA00068">
    <property type="reaction ID" value="UER00113"/>
</dbReference>
<dbReference type="Proteomes" id="UP000001258">
    <property type="component" value="Chromosome"/>
</dbReference>
<dbReference type="GO" id="GO:0005737">
    <property type="term" value="C:cytoplasm"/>
    <property type="evidence" value="ECO:0007669"/>
    <property type="project" value="UniProtKB-SubCell"/>
</dbReference>
<dbReference type="GO" id="GO:0004055">
    <property type="term" value="F:argininosuccinate synthase activity"/>
    <property type="evidence" value="ECO:0007669"/>
    <property type="project" value="UniProtKB-UniRule"/>
</dbReference>
<dbReference type="GO" id="GO:0005524">
    <property type="term" value="F:ATP binding"/>
    <property type="evidence" value="ECO:0007669"/>
    <property type="project" value="UniProtKB-UniRule"/>
</dbReference>
<dbReference type="GO" id="GO:0000053">
    <property type="term" value="P:argininosuccinate metabolic process"/>
    <property type="evidence" value="ECO:0007669"/>
    <property type="project" value="TreeGrafter"/>
</dbReference>
<dbReference type="GO" id="GO:0006526">
    <property type="term" value="P:L-arginine biosynthetic process"/>
    <property type="evidence" value="ECO:0007669"/>
    <property type="project" value="UniProtKB-UniRule"/>
</dbReference>
<dbReference type="GO" id="GO:0000050">
    <property type="term" value="P:urea cycle"/>
    <property type="evidence" value="ECO:0007669"/>
    <property type="project" value="TreeGrafter"/>
</dbReference>
<dbReference type="CDD" id="cd01999">
    <property type="entry name" value="ASS"/>
    <property type="match status" value="1"/>
</dbReference>
<dbReference type="FunFam" id="1.20.5.470:FF:000002">
    <property type="entry name" value="Argininosuccinate synthase"/>
    <property type="match status" value="1"/>
</dbReference>
<dbReference type="FunFam" id="3.40.50.620:FF:000038">
    <property type="entry name" value="Argininosuccinate synthase"/>
    <property type="match status" value="1"/>
</dbReference>
<dbReference type="FunFam" id="3.90.1260.10:FF:000007">
    <property type="entry name" value="Argininosuccinate synthase"/>
    <property type="match status" value="1"/>
</dbReference>
<dbReference type="Gene3D" id="3.90.1260.10">
    <property type="entry name" value="Argininosuccinate synthetase, chain A, domain 2"/>
    <property type="match status" value="1"/>
</dbReference>
<dbReference type="Gene3D" id="3.40.50.620">
    <property type="entry name" value="HUPs"/>
    <property type="match status" value="1"/>
</dbReference>
<dbReference type="Gene3D" id="1.20.5.470">
    <property type="entry name" value="Single helix bin"/>
    <property type="match status" value="1"/>
</dbReference>
<dbReference type="HAMAP" id="MF_00005">
    <property type="entry name" value="Arg_succ_synth_type1"/>
    <property type="match status" value="1"/>
</dbReference>
<dbReference type="InterPro" id="IPR048268">
    <property type="entry name" value="Arginosuc_syn_C"/>
</dbReference>
<dbReference type="InterPro" id="IPR048267">
    <property type="entry name" value="Arginosuc_syn_N"/>
</dbReference>
<dbReference type="InterPro" id="IPR001518">
    <property type="entry name" value="Arginosuc_synth"/>
</dbReference>
<dbReference type="InterPro" id="IPR018223">
    <property type="entry name" value="Arginosuc_synth_CS"/>
</dbReference>
<dbReference type="InterPro" id="IPR023434">
    <property type="entry name" value="Arginosuc_synth_type_1_subfam"/>
</dbReference>
<dbReference type="InterPro" id="IPR024074">
    <property type="entry name" value="AS_cat/multimer_dom_body"/>
</dbReference>
<dbReference type="InterPro" id="IPR014729">
    <property type="entry name" value="Rossmann-like_a/b/a_fold"/>
</dbReference>
<dbReference type="NCBIfam" id="TIGR00032">
    <property type="entry name" value="argG"/>
    <property type="match status" value="1"/>
</dbReference>
<dbReference type="NCBIfam" id="NF001770">
    <property type="entry name" value="PRK00509.1"/>
    <property type="match status" value="1"/>
</dbReference>
<dbReference type="PANTHER" id="PTHR11587">
    <property type="entry name" value="ARGININOSUCCINATE SYNTHASE"/>
    <property type="match status" value="1"/>
</dbReference>
<dbReference type="PANTHER" id="PTHR11587:SF2">
    <property type="entry name" value="ARGININOSUCCINATE SYNTHASE"/>
    <property type="match status" value="1"/>
</dbReference>
<dbReference type="Pfam" id="PF20979">
    <property type="entry name" value="Arginosuc_syn_C"/>
    <property type="match status" value="1"/>
</dbReference>
<dbReference type="Pfam" id="PF00764">
    <property type="entry name" value="Arginosuc_synth"/>
    <property type="match status" value="1"/>
</dbReference>
<dbReference type="SUPFAM" id="SSF52402">
    <property type="entry name" value="Adenine nucleotide alpha hydrolases-like"/>
    <property type="match status" value="1"/>
</dbReference>
<dbReference type="SUPFAM" id="SSF69864">
    <property type="entry name" value="Argininosuccinate synthetase, C-terminal domain"/>
    <property type="match status" value="1"/>
</dbReference>
<dbReference type="PROSITE" id="PS00564">
    <property type="entry name" value="ARGININOSUCCIN_SYN_1"/>
    <property type="match status" value="1"/>
</dbReference>
<dbReference type="PROSITE" id="PS00565">
    <property type="entry name" value="ARGININOSUCCIN_SYN_2"/>
    <property type="match status" value="1"/>
</dbReference>
<protein>
    <recommendedName>
        <fullName evidence="1">Argininosuccinate synthase</fullName>
        <ecNumber evidence="1">6.3.4.5</ecNumber>
    </recommendedName>
    <alternativeName>
        <fullName evidence="1">Citrulline--aspartate ligase</fullName>
    </alternativeName>
</protein>
<feature type="chain" id="PRO_0000148568" description="Argininosuccinate synthase">
    <location>
        <begin position="1"/>
        <end position="409"/>
    </location>
</feature>
<feature type="binding site" evidence="1">
    <location>
        <begin position="9"/>
        <end position="17"/>
    </location>
    <ligand>
        <name>ATP</name>
        <dbReference type="ChEBI" id="CHEBI:30616"/>
    </ligand>
</feature>
<feature type="binding site" evidence="1">
    <location>
        <position position="86"/>
    </location>
    <ligand>
        <name>L-citrulline</name>
        <dbReference type="ChEBI" id="CHEBI:57743"/>
    </ligand>
</feature>
<feature type="binding site" evidence="1">
    <location>
        <position position="116"/>
    </location>
    <ligand>
        <name>ATP</name>
        <dbReference type="ChEBI" id="CHEBI:30616"/>
    </ligand>
</feature>
<feature type="binding site" evidence="1">
    <location>
        <position position="118"/>
    </location>
    <ligand>
        <name>L-aspartate</name>
        <dbReference type="ChEBI" id="CHEBI:29991"/>
    </ligand>
</feature>
<feature type="binding site" evidence="1">
    <location>
        <position position="122"/>
    </location>
    <ligand>
        <name>L-aspartate</name>
        <dbReference type="ChEBI" id="CHEBI:29991"/>
    </ligand>
</feature>
<feature type="binding site" evidence="1">
    <location>
        <position position="122"/>
    </location>
    <ligand>
        <name>L-citrulline</name>
        <dbReference type="ChEBI" id="CHEBI:57743"/>
    </ligand>
</feature>
<feature type="binding site" evidence="1">
    <location>
        <position position="123"/>
    </location>
    <ligand>
        <name>L-aspartate</name>
        <dbReference type="ChEBI" id="CHEBI:29991"/>
    </ligand>
</feature>
<feature type="binding site" evidence="1">
    <location>
        <position position="126"/>
    </location>
    <ligand>
        <name>L-citrulline</name>
        <dbReference type="ChEBI" id="CHEBI:57743"/>
    </ligand>
</feature>
<feature type="binding site" evidence="1">
    <location>
        <position position="174"/>
    </location>
    <ligand>
        <name>L-citrulline</name>
        <dbReference type="ChEBI" id="CHEBI:57743"/>
    </ligand>
</feature>
<feature type="binding site" evidence="1">
    <location>
        <position position="183"/>
    </location>
    <ligand>
        <name>L-citrulline</name>
        <dbReference type="ChEBI" id="CHEBI:57743"/>
    </ligand>
</feature>
<feature type="binding site" evidence="1">
    <location>
        <position position="259"/>
    </location>
    <ligand>
        <name>L-citrulline</name>
        <dbReference type="ChEBI" id="CHEBI:57743"/>
    </ligand>
</feature>
<feature type="binding site" evidence="1">
    <location>
        <position position="271"/>
    </location>
    <ligand>
        <name>L-citrulline</name>
        <dbReference type="ChEBI" id="CHEBI:57743"/>
    </ligand>
</feature>
<keyword id="KW-0028">Amino-acid biosynthesis</keyword>
<keyword id="KW-0055">Arginine biosynthesis</keyword>
<keyword id="KW-0067">ATP-binding</keyword>
<keyword id="KW-0963">Cytoplasm</keyword>
<keyword id="KW-0436">Ligase</keyword>
<keyword id="KW-0547">Nucleotide-binding</keyword>
<keyword id="KW-1185">Reference proteome</keyword>
<evidence type="ECO:0000255" key="1">
    <source>
        <dbReference type="HAMAP-Rule" id="MF_00005"/>
    </source>
</evidence>